<proteinExistence type="inferred from homology"/>
<name>QUEC_ECOBW</name>
<reference key="1">
    <citation type="journal article" date="2009" name="J. Bacteriol.">
        <title>Genomic sequencing reveals regulatory mutations and recombinational events in the widely used MC4100 lineage of Escherichia coli K-12.</title>
        <authorList>
            <person name="Ferenci T."/>
            <person name="Zhou Z."/>
            <person name="Betteridge T."/>
            <person name="Ren Y."/>
            <person name="Liu Y."/>
            <person name="Feng L."/>
            <person name="Reeves P.R."/>
            <person name="Wang L."/>
        </authorList>
    </citation>
    <scope>NUCLEOTIDE SEQUENCE [LARGE SCALE GENOMIC DNA]</scope>
    <source>
        <strain>K12 / MC4100 / BW2952</strain>
    </source>
</reference>
<gene>
    <name evidence="1" type="primary">queC</name>
    <name type="ordered locus">BWG_0326</name>
</gene>
<protein>
    <recommendedName>
        <fullName evidence="1">7-cyano-7-deazaguanine synthase</fullName>
        <ecNumber evidence="1">6.3.4.20</ecNumber>
    </recommendedName>
    <alternativeName>
        <fullName evidence="1">7-cyano-7-carbaguanine synthase</fullName>
    </alternativeName>
    <alternativeName>
        <fullName evidence="1">PreQ(0) synthase</fullName>
    </alternativeName>
    <alternativeName>
        <fullName evidence="1">Queuosine biosynthesis protein QueC</fullName>
    </alternativeName>
</protein>
<dbReference type="EC" id="6.3.4.20" evidence="1"/>
<dbReference type="EMBL" id="CP001396">
    <property type="protein sequence ID" value="ACR64144.1"/>
    <property type="molecule type" value="Genomic_DNA"/>
</dbReference>
<dbReference type="RefSeq" id="WP_000817220.1">
    <property type="nucleotide sequence ID" value="NC_012759.1"/>
</dbReference>
<dbReference type="SMR" id="C4ZTK1"/>
<dbReference type="KEGG" id="ebw:BWG_0326"/>
<dbReference type="HOGENOM" id="CLU_081854_0_0_6"/>
<dbReference type="UniPathway" id="UPA00391"/>
<dbReference type="GO" id="GO:0005524">
    <property type="term" value="F:ATP binding"/>
    <property type="evidence" value="ECO:0007669"/>
    <property type="project" value="UniProtKB-UniRule"/>
</dbReference>
<dbReference type="GO" id="GO:0016879">
    <property type="term" value="F:ligase activity, forming carbon-nitrogen bonds"/>
    <property type="evidence" value="ECO:0007669"/>
    <property type="project" value="UniProtKB-UniRule"/>
</dbReference>
<dbReference type="GO" id="GO:0008270">
    <property type="term" value="F:zinc ion binding"/>
    <property type="evidence" value="ECO:0007669"/>
    <property type="project" value="UniProtKB-UniRule"/>
</dbReference>
<dbReference type="GO" id="GO:0008616">
    <property type="term" value="P:queuosine biosynthetic process"/>
    <property type="evidence" value="ECO:0007669"/>
    <property type="project" value="UniProtKB-UniRule"/>
</dbReference>
<dbReference type="CDD" id="cd01995">
    <property type="entry name" value="QueC-like"/>
    <property type="match status" value="1"/>
</dbReference>
<dbReference type="FunFam" id="3.40.50.620:FF:000017">
    <property type="entry name" value="7-cyano-7-deazaguanine synthase"/>
    <property type="match status" value="1"/>
</dbReference>
<dbReference type="Gene3D" id="3.40.50.620">
    <property type="entry name" value="HUPs"/>
    <property type="match status" value="1"/>
</dbReference>
<dbReference type="HAMAP" id="MF_01633">
    <property type="entry name" value="QueC"/>
    <property type="match status" value="1"/>
</dbReference>
<dbReference type="InterPro" id="IPR018317">
    <property type="entry name" value="QueC"/>
</dbReference>
<dbReference type="InterPro" id="IPR014729">
    <property type="entry name" value="Rossmann-like_a/b/a_fold"/>
</dbReference>
<dbReference type="NCBIfam" id="TIGR00364">
    <property type="entry name" value="7-cyano-7-deazaguanine synthase QueC"/>
    <property type="match status" value="1"/>
</dbReference>
<dbReference type="NCBIfam" id="NF008317">
    <property type="entry name" value="PRK11106.1"/>
    <property type="match status" value="1"/>
</dbReference>
<dbReference type="PANTHER" id="PTHR42914">
    <property type="entry name" value="7-CYANO-7-DEAZAGUANINE SYNTHASE"/>
    <property type="match status" value="1"/>
</dbReference>
<dbReference type="PANTHER" id="PTHR42914:SF1">
    <property type="entry name" value="7-CYANO-7-DEAZAGUANINE SYNTHASE"/>
    <property type="match status" value="1"/>
</dbReference>
<dbReference type="Pfam" id="PF06508">
    <property type="entry name" value="QueC"/>
    <property type="match status" value="1"/>
</dbReference>
<dbReference type="PIRSF" id="PIRSF006293">
    <property type="entry name" value="ExsB"/>
    <property type="match status" value="1"/>
</dbReference>
<dbReference type="SUPFAM" id="SSF52402">
    <property type="entry name" value="Adenine nucleotide alpha hydrolases-like"/>
    <property type="match status" value="1"/>
</dbReference>
<feature type="chain" id="PRO_1000215789" description="7-cyano-7-deazaguanine synthase">
    <location>
        <begin position="1"/>
        <end position="231"/>
    </location>
</feature>
<feature type="binding site" evidence="1">
    <location>
        <begin position="8"/>
        <end position="18"/>
    </location>
    <ligand>
        <name>ATP</name>
        <dbReference type="ChEBI" id="CHEBI:30616"/>
    </ligand>
</feature>
<feature type="binding site" evidence="1">
    <location>
        <position position="188"/>
    </location>
    <ligand>
        <name>Zn(2+)</name>
        <dbReference type="ChEBI" id="CHEBI:29105"/>
    </ligand>
</feature>
<feature type="binding site" evidence="1">
    <location>
        <position position="197"/>
    </location>
    <ligand>
        <name>Zn(2+)</name>
        <dbReference type="ChEBI" id="CHEBI:29105"/>
    </ligand>
</feature>
<feature type="binding site" evidence="1">
    <location>
        <position position="200"/>
    </location>
    <ligand>
        <name>Zn(2+)</name>
        <dbReference type="ChEBI" id="CHEBI:29105"/>
    </ligand>
</feature>
<feature type="binding site" evidence="1">
    <location>
        <position position="203"/>
    </location>
    <ligand>
        <name>Zn(2+)</name>
        <dbReference type="ChEBI" id="CHEBI:29105"/>
    </ligand>
</feature>
<keyword id="KW-0067">ATP-binding</keyword>
<keyword id="KW-0436">Ligase</keyword>
<keyword id="KW-0479">Metal-binding</keyword>
<keyword id="KW-0547">Nucleotide-binding</keyword>
<keyword id="KW-0671">Queuosine biosynthesis</keyword>
<keyword id="KW-0862">Zinc</keyword>
<comment type="function">
    <text evidence="1">Catalyzes the ATP-dependent conversion of 7-carboxy-7-deazaguanine (CDG) to 7-cyano-7-deazaguanine (preQ(0)).</text>
</comment>
<comment type="catalytic activity">
    <reaction evidence="1">
        <text>7-carboxy-7-deazaguanine + NH4(+) + ATP = 7-cyano-7-deazaguanine + ADP + phosphate + H2O + H(+)</text>
        <dbReference type="Rhea" id="RHEA:27982"/>
        <dbReference type="ChEBI" id="CHEBI:15377"/>
        <dbReference type="ChEBI" id="CHEBI:15378"/>
        <dbReference type="ChEBI" id="CHEBI:28938"/>
        <dbReference type="ChEBI" id="CHEBI:30616"/>
        <dbReference type="ChEBI" id="CHEBI:43474"/>
        <dbReference type="ChEBI" id="CHEBI:45075"/>
        <dbReference type="ChEBI" id="CHEBI:61036"/>
        <dbReference type="ChEBI" id="CHEBI:456216"/>
        <dbReference type="EC" id="6.3.4.20"/>
    </reaction>
</comment>
<comment type="cofactor">
    <cofactor evidence="1">
        <name>Zn(2+)</name>
        <dbReference type="ChEBI" id="CHEBI:29105"/>
    </cofactor>
    <text evidence="1">Binds 1 zinc ion per subunit.</text>
</comment>
<comment type="pathway">
    <text evidence="1">Purine metabolism; 7-cyano-7-deazaguanine biosynthesis.</text>
</comment>
<comment type="similarity">
    <text evidence="1">Belongs to the QueC family.</text>
</comment>
<evidence type="ECO:0000255" key="1">
    <source>
        <dbReference type="HAMAP-Rule" id="MF_01633"/>
    </source>
</evidence>
<accession>C4ZTK1</accession>
<sequence>MKRAVVVFSGGQDSTTCLVQALQQYDEVHCVTFDYGQRHRAEIDVARELALKLGARAHKVLDVTLLNELAVSSLTRDSIPVPDYEPEADGIPNTFVPGRNILFLTLAAIYAYQVKAEAVITGVCETDFSGYPDCRDEFVKALNHAVSLGMAKDIRFETPLMWIDKAETWALADYYGKLDLVRNETLTCYNGFKGDGCGHCAACNLRANGLNHYLADKPTVMAAMKQKTGLR</sequence>
<organism>
    <name type="scientific">Escherichia coli (strain K12 / MC4100 / BW2952)</name>
    <dbReference type="NCBI Taxonomy" id="595496"/>
    <lineage>
        <taxon>Bacteria</taxon>
        <taxon>Pseudomonadati</taxon>
        <taxon>Pseudomonadota</taxon>
        <taxon>Gammaproteobacteria</taxon>
        <taxon>Enterobacterales</taxon>
        <taxon>Enterobacteriaceae</taxon>
        <taxon>Escherichia</taxon>
    </lineage>
</organism>